<accession>Q6LA42</accession>
<accession>F4KH52</accession>
<accession>Q9FGE3</accession>
<reference key="1">
    <citation type="journal article" date="2000" name="Plant Cell Physiol.">
        <title>Circadian waves of expression of the APRR1/TOC1 family of pseudo-response regulators in Arabidopsis thaliana: insight into the plant circadian clock.</title>
        <authorList>
            <person name="Matsushika A."/>
            <person name="Makino S."/>
            <person name="Kojima M."/>
            <person name="Mizuno T."/>
        </authorList>
    </citation>
    <scope>NUCLEOTIDE SEQUENCE [MRNA]</scope>
    <scope>FUNCTION</scope>
</reference>
<reference key="2">
    <citation type="submission" date="1999-04" db="EMBL/GenBank/DDBJ databases">
        <title>Structural analysis of Arabidopsis thaliana chromosome 5. XI.</title>
        <authorList>
            <person name="Kaneko T."/>
            <person name="Katoh T."/>
            <person name="Asamizu E."/>
            <person name="Sato S."/>
            <person name="Nakamura Y."/>
            <person name="Kotani H."/>
            <person name="Tabata S."/>
        </authorList>
    </citation>
    <scope>NUCLEOTIDE SEQUENCE [LARGE SCALE GENOMIC DNA]</scope>
    <source>
        <strain>cv. Columbia</strain>
    </source>
</reference>
<reference key="3">
    <citation type="journal article" date="2017" name="Plant J.">
        <title>Araport11: a complete reannotation of the Arabidopsis thaliana reference genome.</title>
        <authorList>
            <person name="Cheng C.Y."/>
            <person name="Krishnakumar V."/>
            <person name="Chan A.P."/>
            <person name="Thibaud-Nissen F."/>
            <person name="Schobel S."/>
            <person name="Town C.D."/>
        </authorList>
    </citation>
    <scope>GENOME REANNOTATION</scope>
    <source>
        <strain>cv. Columbia</strain>
    </source>
</reference>
<reference key="4">
    <citation type="journal article" date="2003" name="Science">
        <title>Empirical analysis of transcriptional activity in the Arabidopsis genome.</title>
        <authorList>
            <person name="Yamada K."/>
            <person name="Lim J."/>
            <person name="Dale J.M."/>
            <person name="Chen H."/>
            <person name="Shinn P."/>
            <person name="Palm C.J."/>
            <person name="Southwick A.M."/>
            <person name="Wu H.C."/>
            <person name="Kim C.J."/>
            <person name="Nguyen M."/>
            <person name="Pham P.K."/>
            <person name="Cheuk R.F."/>
            <person name="Karlin-Newmann G."/>
            <person name="Liu S.X."/>
            <person name="Lam B."/>
            <person name="Sakano H."/>
            <person name="Wu T."/>
            <person name="Yu G."/>
            <person name="Miranda M."/>
            <person name="Quach H.L."/>
            <person name="Tripp M."/>
            <person name="Chang C.H."/>
            <person name="Lee J.M."/>
            <person name="Toriumi M.J."/>
            <person name="Chan M.M."/>
            <person name="Tang C.C."/>
            <person name="Onodera C.S."/>
            <person name="Deng J.M."/>
            <person name="Akiyama K."/>
            <person name="Ansari Y."/>
            <person name="Arakawa T."/>
            <person name="Banh J."/>
            <person name="Banno F."/>
            <person name="Bowser L."/>
            <person name="Brooks S.Y."/>
            <person name="Carninci P."/>
            <person name="Chao Q."/>
            <person name="Choy N."/>
            <person name="Enju A."/>
            <person name="Goldsmith A.D."/>
            <person name="Gurjal M."/>
            <person name="Hansen N.F."/>
            <person name="Hayashizaki Y."/>
            <person name="Johnson-Hopson C."/>
            <person name="Hsuan V.W."/>
            <person name="Iida K."/>
            <person name="Karnes M."/>
            <person name="Khan S."/>
            <person name="Koesema E."/>
            <person name="Ishida J."/>
            <person name="Jiang P.X."/>
            <person name="Jones T."/>
            <person name="Kawai J."/>
            <person name="Kamiya A."/>
            <person name="Meyers C."/>
            <person name="Nakajima M."/>
            <person name="Narusaka M."/>
            <person name="Seki M."/>
            <person name="Sakurai T."/>
            <person name="Satou M."/>
            <person name="Tamse R."/>
            <person name="Vaysberg M."/>
            <person name="Wallender E.K."/>
            <person name="Wong C."/>
            <person name="Yamamura Y."/>
            <person name="Yuan S."/>
            <person name="Shinozaki K."/>
            <person name="Davis R.W."/>
            <person name="Theologis A."/>
            <person name="Ecker J.R."/>
        </authorList>
    </citation>
    <scope>NUCLEOTIDE SEQUENCE [LARGE SCALE MRNA]</scope>
    <source>
        <strain>cv. Columbia</strain>
    </source>
</reference>
<reference key="5">
    <citation type="journal article" date="2000" name="Plant Cell Physiol.">
        <title>Genes encoding pseudo-response regulators: insight into His-to-Asp phosphorelay and circadian rhythm in Arabidopsis thaliana.</title>
        <authorList>
            <person name="Makino S."/>
            <person name="Kiba T."/>
            <person name="Imamura A."/>
            <person name="Hanaki N."/>
            <person name="Nakamura A."/>
            <person name="Suzuki T."/>
            <person name="Taniguchi M."/>
            <person name="Ueguchi C."/>
            <person name="Sugiyama T."/>
            <person name="Mizuno T."/>
        </authorList>
    </citation>
    <scope>GENE FAMILY</scope>
</reference>
<reference key="6">
    <citation type="journal article" date="2004" name="J. Exp. Bot.">
        <title>Identification of ASK and clock-associated proteins as molecular partners of LKP2 (LOV kelch protein 2) in Arabidopsis.</title>
        <authorList>
            <person name="Yasuhara M."/>
            <person name="Mitsui S."/>
            <person name="Hirano H."/>
            <person name="Takanabe R."/>
            <person name="Tokioka Y."/>
            <person name="Ihara N."/>
            <person name="Komatsu A."/>
            <person name="Seki M."/>
            <person name="Shinozaki K."/>
            <person name="Kiyosue T."/>
        </authorList>
    </citation>
    <scope>INTERACTION WITH ADO1 AND ADO2</scope>
</reference>
<reference key="7">
    <citation type="journal article" date="2008" name="J. Biol. Chem.">
        <title>Post-translational regulation of the Arabidopsis circadian clock through selective proteolysis and phosphorylation of pseudo-response regulator proteins.</title>
        <authorList>
            <person name="Fujiwara S."/>
            <person name="Wang L."/>
            <person name="Han L."/>
            <person name="Suh S.-S."/>
            <person name="Salome P.A."/>
            <person name="McClung C.R."/>
            <person name="Somers D.E."/>
        </authorList>
    </citation>
    <scope>INTERACTION WITH ADO1</scope>
    <scope>PHOSPHORYLATION</scope>
</reference>
<reference key="8">
    <citation type="journal article" date="2010" name="Plant Cell">
        <title>PSEUDO-RESPONSE REGULATORS 9, 7, and 5 are transcriptional repressors in the Arabidopsis circadian clock.</title>
        <authorList>
            <person name="Nakamichi N."/>
            <person name="Kiba T."/>
            <person name="Henriques R."/>
            <person name="Mizuno T."/>
            <person name="Chua N.H."/>
            <person name="Sakakibara H."/>
        </authorList>
    </citation>
    <scope>FUNCTION</scope>
</reference>
<reference key="9">
    <citation type="journal article" date="2011" name="Plant Cell">
        <title>LIGHT-REGULATED WD1 and PSEUDO-RESPONSE REGULATOR9 form a positive feedback regulatory loop in the Arabidopsis circadian clock.</title>
        <authorList>
            <person name="Wang Y."/>
            <person name="Wu J.F."/>
            <person name="Nakamichi N."/>
            <person name="Sakakibara H."/>
            <person name="Nam H.G."/>
            <person name="Wu S.H."/>
        </authorList>
    </citation>
    <scope>FUNCTION</scope>
</reference>
<reference key="10">
    <citation type="journal article" date="2011" name="PLoS Genet.">
        <title>REVEILLE8 and PSEUDO-RESPONSE REGULATOR5 form a negative feedback loop within the Arabidopsis circadian clock.</title>
        <authorList>
            <person name="Rawat R."/>
            <person name="Takahashi N."/>
            <person name="Hsu P.Y."/>
            <person name="Jones M.A."/>
            <person name="Schwartz J."/>
            <person name="Salemi M.R."/>
            <person name="Phinney B.S."/>
            <person name="Harmer S.L."/>
        </authorList>
    </citation>
    <scope>FUNCTION</scope>
</reference>
<reference key="11">
    <citation type="journal article" date="2012" name="Proc. Natl. Acad. Sci. U.S.A.">
        <title>Transcriptional repressor PRR5 directly regulates clock-output pathways.</title>
        <authorList>
            <person name="Nakamichi N."/>
            <person name="Kiba T."/>
            <person name="Kamioka M."/>
            <person name="Suzuki T."/>
            <person name="Yamashino T."/>
            <person name="Higashiyama T."/>
            <person name="Sakakibara H."/>
            <person name="Mizuno T."/>
        </authorList>
    </citation>
    <scope>FUNCTION</scope>
</reference>
<reference key="12">
    <citation type="journal article" date="2013" name="Plant Signal. Behav.">
        <title>The unique function of the Arabidopsis circadian clock gene PRR5 in the regulation of shade avoidance response.</title>
        <authorList>
            <person name="Takase M."/>
            <person name="Mizoguchi T."/>
            <person name="Kozuka T."/>
            <person name="Tsukaya H."/>
        </authorList>
    </citation>
    <scope>FUNCTION</scope>
</reference>
<reference key="13">
    <citation type="journal article" date="2020" name="Mol. Plant">
        <title>Nuclear Localized O-Fucosyltransferase SPY Facilitates PRR5 Proteolysis to Fine-Tune the Pace of Arabidopsis Circadian Clock.</title>
        <authorList>
            <person name="Wang Y."/>
            <person name="He Y."/>
            <person name="Su C."/>
            <person name="Zentella R."/>
            <person name="Sun T.P."/>
            <person name="Wang L."/>
        </authorList>
    </citation>
    <scope>SUBCELLULAR LOCATION</scope>
    <scope>INTERACTION WITH SPY</scope>
    <scope>O-FUCOSYLATION</scope>
</reference>
<keyword id="KW-0090">Biological rhythms</keyword>
<keyword id="KW-0175">Coiled coil</keyword>
<keyword id="KW-0539">Nucleus</keyword>
<keyword id="KW-0597">Phosphoprotein</keyword>
<keyword id="KW-1185">Reference proteome</keyword>
<keyword id="KW-0804">Transcription</keyword>
<keyword id="KW-0805">Transcription regulation</keyword>
<keyword id="KW-0902">Two-component regulatory system</keyword>
<organism>
    <name type="scientific">Arabidopsis thaliana</name>
    <name type="common">Mouse-ear cress</name>
    <dbReference type="NCBI Taxonomy" id="3702"/>
    <lineage>
        <taxon>Eukaryota</taxon>
        <taxon>Viridiplantae</taxon>
        <taxon>Streptophyta</taxon>
        <taxon>Embryophyta</taxon>
        <taxon>Tracheophyta</taxon>
        <taxon>Spermatophyta</taxon>
        <taxon>Magnoliopsida</taxon>
        <taxon>eudicotyledons</taxon>
        <taxon>Gunneridae</taxon>
        <taxon>Pentapetalae</taxon>
        <taxon>rosids</taxon>
        <taxon>malvids</taxon>
        <taxon>Brassicales</taxon>
        <taxon>Brassicaceae</taxon>
        <taxon>Camelineae</taxon>
        <taxon>Arabidopsis</taxon>
    </lineage>
</organism>
<protein>
    <recommendedName>
        <fullName>Two-component response regulator-like APRR5</fullName>
    </recommendedName>
    <alternativeName>
        <fullName>Pseudo-response regulator 5</fullName>
    </alternativeName>
</protein>
<feature type="chain" id="PRO_0000081437" description="Two-component response regulator-like APRR5">
    <location>
        <begin position="1"/>
        <end position="558"/>
    </location>
</feature>
<feature type="domain" description="Response regulatory" evidence="2">
    <location>
        <begin position="51"/>
        <end position="169"/>
    </location>
</feature>
<feature type="domain" description="CCT" evidence="3">
    <location>
        <begin position="509"/>
        <end position="551"/>
    </location>
</feature>
<feature type="region of interest" description="Disordered" evidence="4">
    <location>
        <begin position="180"/>
        <end position="233"/>
    </location>
</feature>
<feature type="region of interest" description="Disordered" evidence="4">
    <location>
        <begin position="297"/>
        <end position="319"/>
    </location>
</feature>
<feature type="region of interest" description="Disordered" evidence="4">
    <location>
        <begin position="535"/>
        <end position="558"/>
    </location>
</feature>
<feature type="coiled-coil region" evidence="1">
    <location>
        <begin position="240"/>
        <end position="260"/>
    </location>
</feature>
<feature type="compositionally biased region" description="Polar residues" evidence="4">
    <location>
        <begin position="303"/>
        <end position="319"/>
    </location>
</feature>
<proteinExistence type="evidence at protein level"/>
<name>APRR5_ARATH</name>
<sequence length="558" mass="62301">MTSSEEVVEVTVVKAPEAGGGKLSRRKIRKKDAGVDGLVKWERFLPKIALRVLLVEADDSTRQIIAALLRKCSYRVAAVPDGLKAWEMLKGKPESVDLILTEVDLPSISGYALLTLIMEHDICKNIPVIMMSTQDSVNTVYKCMLKGAADYLVKPLRRNELRNLWQHVWRRQTSLAPDSFPWNESVGQQKAEGASANNSNGKRDDHVVSGNGGDAQSSCTRPEMEGESADVEVSARDAVQMECAKSQFNETRLLANELQSKQAEAIDFMGASFRRTGRRNREESVAQYESRIELDLSLRRPNASENQSSGDRPSLHPSSASAFTRYVHRPLQTQCSASPVVTDQRKNVAASQDDNIVLMNQYNTSEPPPNAPRRNDTSFYTGADSPGPPFSNQLNSWPGQSSYPTPTPINNIQFRDPNTAYTSAMAPASLSPSPSSVSPHEYSSMFHPFNSKPEGLQDRDCSMDVDERRYVSSATEHSAIGNHIDQLIEKKNEDGYSLSVGKIQQSLQREAALTKFRMKRKDRCYEKKVRYESRKKLAEQRPRIKGQFVRQVQSTQAP</sequence>
<comment type="function">
    <text evidence="5 8 9 10 11 12">Transcriptional repressor of CCA1 and LHY, thereby controlling photoperiodic flowering response. Involved in the positive and negative feedback loops of the circadian clock. With RVE8, forms a negative feedback loop of the circadian clock (PubMed:21483796). Expression of several members of the ARR-like family is controlled by circadian rhythm. Proteolytic substrate of the E3 ubiquitin ligase SCF(ADO1) complex. APRR9, APRR7, and APRR5 coordinately act on the upstream region of the target genes to repress their expression from noon until midnight. The particular coordinated sequential expression of APRR9, APRR7, APRR5, APRR3 and APPR1 result to circadian waves that may be at the basis of the endogenous circadian clock. Negative regulator of shade avoidance response. Involved in the inhibition of leaf expansion in shade avoidance response.</text>
</comment>
<comment type="subunit">
    <text evidence="6 7 13">Interacts with ADO1 and ADO2 (PubMed:15310821, PubMed:18562312). Interacts with SPY (via N-terminus) (PubMed:31899321).</text>
</comment>
<comment type="interaction">
    <interactant intactId="EBI-1536669">
        <id>Q6LA42</id>
    </interactant>
    <interactant intactId="EBI-618423">
        <id>Q9LKL2</id>
        <label>APRR1</label>
    </interactant>
    <organismsDiffer>false</organismsDiffer>
    <experiments>5</experiments>
</comment>
<comment type="subcellular location">
    <subcellularLocation>
        <location evidence="13">Nucleus</location>
    </subcellularLocation>
</comment>
<comment type="PTM">
    <text evidence="7">Phosphorylation varies throughout the diurnal cycle and enhances ADO1 binding.</text>
</comment>
<comment type="PTM">
    <text evidence="13">O-fucosylated by SPY (PubMed:31899321). O-fucosylation promotes APRR5 proteolysis (PubMed:31899321).</text>
</comment>
<comment type="miscellaneous">
    <text evidence="15">The expression of APRR9, APRR7, and APRR5 requires the presence of LWD1 and/or LWD2, indicating the existence of a positive feedback loop within the circadian clock.</text>
</comment>
<comment type="similarity">
    <text evidence="14">Belongs to the ARR-like family.</text>
</comment>
<comment type="caution">
    <text evidence="14">Lacks the phospho-accepting Asp (here Glu-102), present in the receiver domain, which is one of the conserved features of two-component response regulators (ARRs) family.</text>
</comment>
<comment type="sequence caution" evidence="14">
    <conflict type="erroneous initiation">
        <sequence resource="EMBL-CDS" id="BAB13743"/>
    </conflict>
    <text>Extended N-terminus.</text>
</comment>
<dbReference type="EMBL" id="AB046955">
    <property type="protein sequence ID" value="BAB13743.1"/>
    <property type="status" value="ALT_INIT"/>
    <property type="molecule type" value="mRNA"/>
</dbReference>
<dbReference type="EMBL" id="AB025641">
    <property type="protein sequence ID" value="BAB08930.1"/>
    <property type="molecule type" value="Genomic_DNA"/>
</dbReference>
<dbReference type="EMBL" id="CP002688">
    <property type="protein sequence ID" value="AED93314.2"/>
    <property type="molecule type" value="Genomic_DNA"/>
</dbReference>
<dbReference type="EMBL" id="AY062114">
    <property type="protein sequence ID" value="AAL32986.1"/>
    <property type="molecule type" value="mRNA"/>
</dbReference>
<dbReference type="EMBL" id="AY143934">
    <property type="protein sequence ID" value="AAN28873.1"/>
    <property type="molecule type" value="mRNA"/>
</dbReference>
<dbReference type="RefSeq" id="NP_568446.2">
    <property type="nucleotide sequence ID" value="NM_122355.4"/>
</dbReference>
<dbReference type="SMR" id="Q6LA42"/>
<dbReference type="BioGRID" id="17793">
    <property type="interactions" value="28"/>
</dbReference>
<dbReference type="FunCoup" id="Q6LA42">
    <property type="interactions" value="55"/>
</dbReference>
<dbReference type="IntAct" id="Q6LA42">
    <property type="interactions" value="4"/>
</dbReference>
<dbReference type="MINT" id="Q6LA42"/>
<dbReference type="STRING" id="3702.Q6LA42"/>
<dbReference type="GlyGen" id="Q6LA42">
    <property type="glycosylation" value="2 sites"/>
</dbReference>
<dbReference type="iPTMnet" id="Q6LA42"/>
<dbReference type="PaxDb" id="3702-AT5G24470.1"/>
<dbReference type="ProteomicsDB" id="244453"/>
<dbReference type="EnsemblPlants" id="AT5G24470.1">
    <property type="protein sequence ID" value="AT5G24470.1"/>
    <property type="gene ID" value="AT5G24470"/>
</dbReference>
<dbReference type="GeneID" id="832518"/>
<dbReference type="Gramene" id="AT5G24470.1">
    <property type="protein sequence ID" value="AT5G24470.1"/>
    <property type="gene ID" value="AT5G24470"/>
</dbReference>
<dbReference type="KEGG" id="ath:AT5G24470"/>
<dbReference type="Araport" id="AT5G24470"/>
<dbReference type="TAIR" id="AT5G24470">
    <property type="gene designation" value="PRR5"/>
</dbReference>
<dbReference type="eggNOG" id="KOG1601">
    <property type="taxonomic scope" value="Eukaryota"/>
</dbReference>
<dbReference type="HOGENOM" id="CLU_015512_2_0_1"/>
<dbReference type="InParanoid" id="Q6LA42"/>
<dbReference type="OMA" id="CKDAYTT"/>
<dbReference type="PhylomeDB" id="Q6LA42"/>
<dbReference type="PRO" id="PR:Q6LA42"/>
<dbReference type="Proteomes" id="UP000006548">
    <property type="component" value="Chromosome 5"/>
</dbReference>
<dbReference type="ExpressionAtlas" id="Q6LA42">
    <property type="expression patterns" value="baseline and differential"/>
</dbReference>
<dbReference type="GO" id="GO:0005634">
    <property type="term" value="C:nucleus"/>
    <property type="evidence" value="ECO:0007669"/>
    <property type="project" value="UniProtKB-SubCell"/>
</dbReference>
<dbReference type="GO" id="GO:0009736">
    <property type="term" value="P:cytokinin-activated signaling pathway"/>
    <property type="evidence" value="ECO:0007669"/>
    <property type="project" value="InterPro"/>
</dbReference>
<dbReference type="GO" id="GO:0000160">
    <property type="term" value="P:phosphorelay signal transduction system"/>
    <property type="evidence" value="ECO:0007669"/>
    <property type="project" value="UniProtKB-KW"/>
</dbReference>
<dbReference type="GO" id="GO:0048511">
    <property type="term" value="P:rhythmic process"/>
    <property type="evidence" value="ECO:0007669"/>
    <property type="project" value="UniProtKB-KW"/>
</dbReference>
<dbReference type="CDD" id="cd17582">
    <property type="entry name" value="psREC_PRR"/>
    <property type="match status" value="1"/>
</dbReference>
<dbReference type="Gene3D" id="3.40.50.2300">
    <property type="match status" value="1"/>
</dbReference>
<dbReference type="InterPro" id="IPR045279">
    <property type="entry name" value="ARR-like"/>
</dbReference>
<dbReference type="InterPro" id="IPR010402">
    <property type="entry name" value="CCT_domain"/>
</dbReference>
<dbReference type="InterPro" id="IPR011006">
    <property type="entry name" value="CheY-like_superfamily"/>
</dbReference>
<dbReference type="InterPro" id="IPR001789">
    <property type="entry name" value="Sig_transdc_resp-reg_receiver"/>
</dbReference>
<dbReference type="PANTHER" id="PTHR43874">
    <property type="entry name" value="TWO-COMPONENT RESPONSE REGULATOR"/>
    <property type="match status" value="1"/>
</dbReference>
<dbReference type="PANTHER" id="PTHR43874:SF95">
    <property type="entry name" value="TWO-COMPONENT RESPONSE REGULATOR-LIKE APRR5"/>
    <property type="match status" value="1"/>
</dbReference>
<dbReference type="Pfam" id="PF06203">
    <property type="entry name" value="CCT"/>
    <property type="match status" value="1"/>
</dbReference>
<dbReference type="Pfam" id="PF00072">
    <property type="entry name" value="Response_reg"/>
    <property type="match status" value="1"/>
</dbReference>
<dbReference type="SMART" id="SM00448">
    <property type="entry name" value="REC"/>
    <property type="match status" value="1"/>
</dbReference>
<dbReference type="SUPFAM" id="SSF52172">
    <property type="entry name" value="CheY-like"/>
    <property type="match status" value="1"/>
</dbReference>
<dbReference type="PROSITE" id="PS51017">
    <property type="entry name" value="CCT"/>
    <property type="match status" value="1"/>
</dbReference>
<dbReference type="PROSITE" id="PS50110">
    <property type="entry name" value="RESPONSE_REGULATORY"/>
    <property type="match status" value="1"/>
</dbReference>
<evidence type="ECO:0000255" key="1"/>
<evidence type="ECO:0000255" key="2">
    <source>
        <dbReference type="PROSITE-ProRule" id="PRU00169"/>
    </source>
</evidence>
<evidence type="ECO:0000255" key="3">
    <source>
        <dbReference type="PROSITE-ProRule" id="PRU00357"/>
    </source>
</evidence>
<evidence type="ECO:0000256" key="4">
    <source>
        <dbReference type="SAM" id="MobiDB-lite"/>
    </source>
</evidence>
<evidence type="ECO:0000269" key="5">
    <source>
    </source>
</evidence>
<evidence type="ECO:0000269" key="6">
    <source>
    </source>
</evidence>
<evidence type="ECO:0000269" key="7">
    <source>
    </source>
</evidence>
<evidence type="ECO:0000269" key="8">
    <source>
    </source>
</evidence>
<evidence type="ECO:0000269" key="9">
    <source>
    </source>
</evidence>
<evidence type="ECO:0000269" key="10">
    <source>
    </source>
</evidence>
<evidence type="ECO:0000269" key="11">
    <source>
    </source>
</evidence>
<evidence type="ECO:0000269" key="12">
    <source>
    </source>
</evidence>
<evidence type="ECO:0000269" key="13">
    <source>
    </source>
</evidence>
<evidence type="ECO:0000305" key="14"/>
<evidence type="ECO:0000305" key="15">
    <source>
    </source>
</evidence>
<gene>
    <name type="primary">APRR5</name>
    <name type="ordered locus">At5g24470</name>
    <name type="ORF">T31K7.5</name>
</gene>